<comment type="subcellular location">
    <subcellularLocation>
        <location evidence="2">Secreted</location>
    </subcellularLocation>
</comment>
<name>YN5E_SCHPO</name>
<proteinExistence type="inferred from homology"/>
<feature type="signal peptide" evidence="1">
    <location>
        <begin position="1"/>
        <end position="26"/>
    </location>
</feature>
<feature type="chain" id="PRO_0000437261" description="Uncharacterized protein SPBC713.14c">
    <location>
        <begin position="27"/>
        <end position="75"/>
    </location>
</feature>
<dbReference type="EMBL" id="CU329671">
    <property type="protein sequence ID" value="CAK9839652.1"/>
    <property type="molecule type" value="Genomic_DNA"/>
</dbReference>
<dbReference type="STRING" id="284812.P0CU21"/>
<dbReference type="EnsemblFungi" id="SPBC713.14c.1">
    <property type="protein sequence ID" value="SPBC713.14c.1:pep"/>
    <property type="gene ID" value="SPBC713.14c"/>
</dbReference>
<dbReference type="PomBase" id="SPBC713.14c"/>
<dbReference type="VEuPathDB" id="FungiDB:SPBC713.14c"/>
<dbReference type="InParanoid" id="P0CU21"/>
<dbReference type="PRO" id="PR:P0CU21"/>
<dbReference type="Proteomes" id="UP000002485">
    <property type="component" value="Chromosome II"/>
</dbReference>
<dbReference type="GO" id="GO:0005576">
    <property type="term" value="C:extracellular region"/>
    <property type="evidence" value="ECO:0007669"/>
    <property type="project" value="UniProtKB-SubCell"/>
</dbReference>
<sequence length="75" mass="8819">MQFLERHFSVLFPVLFFFSFYPISFAPNFDWSTYVSLHYPLTLPNHLALMSSYTHQSHCGTSVFHQAQTLVHLHT</sequence>
<protein>
    <recommendedName>
        <fullName evidence="2">Uncharacterized protein SPBC713.14c</fullName>
    </recommendedName>
</protein>
<keyword id="KW-1185">Reference proteome</keyword>
<keyword id="KW-0964">Secreted</keyword>
<keyword id="KW-0732">Signal</keyword>
<evidence type="ECO:0000255" key="1"/>
<evidence type="ECO:0000305" key="2"/>
<evidence type="ECO:0000312" key="3">
    <source>
        <dbReference type="PomBase" id="SPBC713.14c"/>
    </source>
</evidence>
<organism>
    <name type="scientific">Schizosaccharomyces pombe (strain 972 / ATCC 24843)</name>
    <name type="common">Fission yeast</name>
    <dbReference type="NCBI Taxonomy" id="284812"/>
    <lineage>
        <taxon>Eukaryota</taxon>
        <taxon>Fungi</taxon>
        <taxon>Dikarya</taxon>
        <taxon>Ascomycota</taxon>
        <taxon>Taphrinomycotina</taxon>
        <taxon>Schizosaccharomycetes</taxon>
        <taxon>Schizosaccharomycetales</taxon>
        <taxon>Schizosaccharomycetaceae</taxon>
        <taxon>Schizosaccharomyces</taxon>
    </lineage>
</organism>
<gene>
    <name type="ORF">SPBC713.13</name>
    <name evidence="3" type="ORF">SPBC713.14c</name>
</gene>
<reference key="1">
    <citation type="journal article" date="2002" name="Nature">
        <title>The genome sequence of Schizosaccharomyces pombe.</title>
        <authorList>
            <person name="Wood V."/>
            <person name="Gwilliam R."/>
            <person name="Rajandream M.A."/>
            <person name="Lyne M.H."/>
            <person name="Lyne R."/>
            <person name="Stewart A."/>
            <person name="Sgouros J.G."/>
            <person name="Peat N."/>
            <person name="Hayles J."/>
            <person name="Baker S.G."/>
            <person name="Basham D."/>
            <person name="Bowman S."/>
            <person name="Brooks K."/>
            <person name="Brown D."/>
            <person name="Brown S."/>
            <person name="Chillingworth T."/>
            <person name="Churcher C.M."/>
            <person name="Collins M."/>
            <person name="Connor R."/>
            <person name="Cronin A."/>
            <person name="Davis P."/>
            <person name="Feltwell T."/>
            <person name="Fraser A."/>
            <person name="Gentles S."/>
            <person name="Goble A."/>
            <person name="Hamlin N."/>
            <person name="Harris D.E."/>
            <person name="Hidalgo J."/>
            <person name="Hodgson G."/>
            <person name="Holroyd S."/>
            <person name="Hornsby T."/>
            <person name="Howarth S."/>
            <person name="Huckle E.J."/>
            <person name="Hunt S."/>
            <person name="Jagels K."/>
            <person name="James K.D."/>
            <person name="Jones L."/>
            <person name="Jones M."/>
            <person name="Leather S."/>
            <person name="McDonald S."/>
            <person name="McLean J."/>
            <person name="Mooney P."/>
            <person name="Moule S."/>
            <person name="Mungall K.L."/>
            <person name="Murphy L.D."/>
            <person name="Niblett D."/>
            <person name="Odell C."/>
            <person name="Oliver K."/>
            <person name="O'Neil S."/>
            <person name="Pearson D."/>
            <person name="Quail M.A."/>
            <person name="Rabbinowitsch E."/>
            <person name="Rutherford K.M."/>
            <person name="Rutter S."/>
            <person name="Saunders D."/>
            <person name="Seeger K."/>
            <person name="Sharp S."/>
            <person name="Skelton J."/>
            <person name="Simmonds M.N."/>
            <person name="Squares R."/>
            <person name="Squares S."/>
            <person name="Stevens K."/>
            <person name="Taylor K."/>
            <person name="Taylor R.G."/>
            <person name="Tivey A."/>
            <person name="Walsh S.V."/>
            <person name="Warren T."/>
            <person name="Whitehead S."/>
            <person name="Woodward J.R."/>
            <person name="Volckaert G."/>
            <person name="Aert R."/>
            <person name="Robben J."/>
            <person name="Grymonprez B."/>
            <person name="Weltjens I."/>
            <person name="Vanstreels E."/>
            <person name="Rieger M."/>
            <person name="Schaefer M."/>
            <person name="Mueller-Auer S."/>
            <person name="Gabel C."/>
            <person name="Fuchs M."/>
            <person name="Duesterhoeft A."/>
            <person name="Fritzc C."/>
            <person name="Holzer E."/>
            <person name="Moestl D."/>
            <person name="Hilbert H."/>
            <person name="Borzym K."/>
            <person name="Langer I."/>
            <person name="Beck A."/>
            <person name="Lehrach H."/>
            <person name="Reinhardt R."/>
            <person name="Pohl T.M."/>
            <person name="Eger P."/>
            <person name="Zimmermann W."/>
            <person name="Wedler H."/>
            <person name="Wambutt R."/>
            <person name="Purnelle B."/>
            <person name="Goffeau A."/>
            <person name="Cadieu E."/>
            <person name="Dreano S."/>
            <person name="Gloux S."/>
            <person name="Lelaure V."/>
            <person name="Mottier S."/>
            <person name="Galibert F."/>
            <person name="Aves S.J."/>
            <person name="Xiang Z."/>
            <person name="Hunt C."/>
            <person name="Moore K."/>
            <person name="Hurst S.M."/>
            <person name="Lucas M."/>
            <person name="Rochet M."/>
            <person name="Gaillardin C."/>
            <person name="Tallada V.A."/>
            <person name="Garzon A."/>
            <person name="Thode G."/>
            <person name="Daga R.R."/>
            <person name="Cruzado L."/>
            <person name="Jimenez J."/>
            <person name="Sanchez M."/>
            <person name="del Rey F."/>
            <person name="Benito J."/>
            <person name="Dominguez A."/>
            <person name="Revuelta J.L."/>
            <person name="Moreno S."/>
            <person name="Armstrong J."/>
            <person name="Forsburg S.L."/>
            <person name="Cerutti L."/>
            <person name="Lowe T."/>
            <person name="McCombie W.R."/>
            <person name="Paulsen I."/>
            <person name="Potashkin J."/>
            <person name="Shpakovski G.V."/>
            <person name="Ussery D."/>
            <person name="Barrell B.G."/>
            <person name="Nurse P."/>
        </authorList>
    </citation>
    <scope>NUCLEOTIDE SEQUENCE [LARGE SCALE GENOMIC DNA]</scope>
    <source>
        <strain>972 / ATCC 24843</strain>
    </source>
</reference>
<reference key="2">
    <citation type="journal article" date="2014" name="Nat. Struct. Mol. Biol.">
        <title>The translational landscape of fission-yeast meiosis and sporulation.</title>
        <authorList>
            <person name="Duncan C.D."/>
            <person name="Mata J."/>
        </authorList>
    </citation>
    <scope>IDENTIFICATION</scope>
</reference>
<accession>P0CU21</accession>
<accession>A0AAN2H7L6</accession>